<organism>
    <name type="scientific">Burkholderia orbicola (strain MC0-3)</name>
    <dbReference type="NCBI Taxonomy" id="406425"/>
    <lineage>
        <taxon>Bacteria</taxon>
        <taxon>Pseudomonadati</taxon>
        <taxon>Pseudomonadota</taxon>
        <taxon>Betaproteobacteria</taxon>
        <taxon>Burkholderiales</taxon>
        <taxon>Burkholderiaceae</taxon>
        <taxon>Burkholderia</taxon>
        <taxon>Burkholderia cepacia complex</taxon>
        <taxon>Burkholderia orbicola</taxon>
    </lineage>
</organism>
<name>RS4_BURO0</name>
<protein>
    <recommendedName>
        <fullName evidence="1">Small ribosomal subunit protein uS4</fullName>
    </recommendedName>
    <alternativeName>
        <fullName evidence="3">30S ribosomal protein S4</fullName>
    </alternativeName>
</protein>
<evidence type="ECO:0000255" key="1">
    <source>
        <dbReference type="HAMAP-Rule" id="MF_01306"/>
    </source>
</evidence>
<evidence type="ECO:0000256" key="2">
    <source>
        <dbReference type="SAM" id="MobiDB-lite"/>
    </source>
</evidence>
<evidence type="ECO:0000305" key="3"/>
<gene>
    <name evidence="1" type="primary">rpsD</name>
    <name type="ordered locus">Bcenmc03_0352</name>
</gene>
<proteinExistence type="inferred from homology"/>
<accession>B1JU47</accession>
<dbReference type="EMBL" id="CP000958">
    <property type="protein sequence ID" value="ACA89532.1"/>
    <property type="molecule type" value="Genomic_DNA"/>
</dbReference>
<dbReference type="RefSeq" id="WP_006477177.1">
    <property type="nucleotide sequence ID" value="NC_010508.1"/>
</dbReference>
<dbReference type="SMR" id="B1JU47"/>
<dbReference type="GeneID" id="83047156"/>
<dbReference type="KEGG" id="bcm:Bcenmc03_0352"/>
<dbReference type="HOGENOM" id="CLU_092403_0_2_4"/>
<dbReference type="Proteomes" id="UP000002169">
    <property type="component" value="Chromosome 1"/>
</dbReference>
<dbReference type="GO" id="GO:0015935">
    <property type="term" value="C:small ribosomal subunit"/>
    <property type="evidence" value="ECO:0007669"/>
    <property type="project" value="InterPro"/>
</dbReference>
<dbReference type="GO" id="GO:0019843">
    <property type="term" value="F:rRNA binding"/>
    <property type="evidence" value="ECO:0007669"/>
    <property type="project" value="UniProtKB-UniRule"/>
</dbReference>
<dbReference type="GO" id="GO:0003735">
    <property type="term" value="F:structural constituent of ribosome"/>
    <property type="evidence" value="ECO:0007669"/>
    <property type="project" value="InterPro"/>
</dbReference>
<dbReference type="GO" id="GO:0042274">
    <property type="term" value="P:ribosomal small subunit biogenesis"/>
    <property type="evidence" value="ECO:0007669"/>
    <property type="project" value="TreeGrafter"/>
</dbReference>
<dbReference type="GO" id="GO:0006412">
    <property type="term" value="P:translation"/>
    <property type="evidence" value="ECO:0007669"/>
    <property type="project" value="UniProtKB-UniRule"/>
</dbReference>
<dbReference type="CDD" id="cd00165">
    <property type="entry name" value="S4"/>
    <property type="match status" value="1"/>
</dbReference>
<dbReference type="FunFam" id="1.10.1050.10:FF:000001">
    <property type="entry name" value="30S ribosomal protein S4"/>
    <property type="match status" value="1"/>
</dbReference>
<dbReference type="FunFam" id="3.10.290.10:FF:000001">
    <property type="entry name" value="30S ribosomal protein S4"/>
    <property type="match status" value="1"/>
</dbReference>
<dbReference type="Gene3D" id="1.10.1050.10">
    <property type="entry name" value="Ribosomal Protein S4 Delta 41, Chain A, domain 1"/>
    <property type="match status" value="1"/>
</dbReference>
<dbReference type="Gene3D" id="3.10.290.10">
    <property type="entry name" value="RNA-binding S4 domain"/>
    <property type="match status" value="1"/>
</dbReference>
<dbReference type="HAMAP" id="MF_01306_B">
    <property type="entry name" value="Ribosomal_uS4_B"/>
    <property type="match status" value="1"/>
</dbReference>
<dbReference type="InterPro" id="IPR022801">
    <property type="entry name" value="Ribosomal_uS4"/>
</dbReference>
<dbReference type="InterPro" id="IPR005709">
    <property type="entry name" value="Ribosomal_uS4_bac-type"/>
</dbReference>
<dbReference type="InterPro" id="IPR018079">
    <property type="entry name" value="Ribosomal_uS4_CS"/>
</dbReference>
<dbReference type="InterPro" id="IPR001912">
    <property type="entry name" value="Ribosomal_uS4_N"/>
</dbReference>
<dbReference type="InterPro" id="IPR002942">
    <property type="entry name" value="S4_RNA-bd"/>
</dbReference>
<dbReference type="InterPro" id="IPR036986">
    <property type="entry name" value="S4_RNA-bd_sf"/>
</dbReference>
<dbReference type="NCBIfam" id="NF003717">
    <property type="entry name" value="PRK05327.1"/>
    <property type="match status" value="1"/>
</dbReference>
<dbReference type="NCBIfam" id="TIGR01017">
    <property type="entry name" value="rpsD_bact"/>
    <property type="match status" value="1"/>
</dbReference>
<dbReference type="PANTHER" id="PTHR11831">
    <property type="entry name" value="30S 40S RIBOSOMAL PROTEIN"/>
    <property type="match status" value="1"/>
</dbReference>
<dbReference type="PANTHER" id="PTHR11831:SF4">
    <property type="entry name" value="SMALL RIBOSOMAL SUBUNIT PROTEIN US4M"/>
    <property type="match status" value="1"/>
</dbReference>
<dbReference type="Pfam" id="PF00163">
    <property type="entry name" value="Ribosomal_S4"/>
    <property type="match status" value="1"/>
</dbReference>
<dbReference type="Pfam" id="PF01479">
    <property type="entry name" value="S4"/>
    <property type="match status" value="1"/>
</dbReference>
<dbReference type="SMART" id="SM01390">
    <property type="entry name" value="Ribosomal_S4"/>
    <property type="match status" value="1"/>
</dbReference>
<dbReference type="SMART" id="SM00363">
    <property type="entry name" value="S4"/>
    <property type="match status" value="1"/>
</dbReference>
<dbReference type="SUPFAM" id="SSF55174">
    <property type="entry name" value="Alpha-L RNA-binding motif"/>
    <property type="match status" value="1"/>
</dbReference>
<dbReference type="PROSITE" id="PS00632">
    <property type="entry name" value="RIBOSOMAL_S4"/>
    <property type="match status" value="1"/>
</dbReference>
<dbReference type="PROSITE" id="PS50889">
    <property type="entry name" value="S4"/>
    <property type="match status" value="1"/>
</dbReference>
<sequence length="207" mass="23186">MARYIGPKAKLSRREGTDLFLKSARRSLADKCKLDSKPGQHGRTSGARTSDYGTQLREKQKVKRIYGVLERQFRRYFAEADRRKGNTGENLLQLLESRLDNVVYRMGFGSTRAEARQLVSHKSITVNGVVANVPSQQVKAGDVVAIREKAKKQARIVEALSLAEQGGMPSWVAVDAKKFEGTFKQMPERAEIAGDINESLIVELYSR</sequence>
<keyword id="KW-0687">Ribonucleoprotein</keyword>
<keyword id="KW-0689">Ribosomal protein</keyword>
<keyword id="KW-0694">RNA-binding</keyword>
<keyword id="KW-0699">rRNA-binding</keyword>
<reference key="1">
    <citation type="submission" date="2008-02" db="EMBL/GenBank/DDBJ databases">
        <title>Complete sequence of chromosome 1 of Burkholderia cenocepacia MC0-3.</title>
        <authorList>
            <person name="Copeland A."/>
            <person name="Lucas S."/>
            <person name="Lapidus A."/>
            <person name="Barry K."/>
            <person name="Bruce D."/>
            <person name="Goodwin L."/>
            <person name="Glavina del Rio T."/>
            <person name="Dalin E."/>
            <person name="Tice H."/>
            <person name="Pitluck S."/>
            <person name="Chain P."/>
            <person name="Malfatti S."/>
            <person name="Shin M."/>
            <person name="Vergez L."/>
            <person name="Schmutz J."/>
            <person name="Larimer F."/>
            <person name="Land M."/>
            <person name="Hauser L."/>
            <person name="Kyrpides N."/>
            <person name="Mikhailova N."/>
            <person name="Tiedje J."/>
            <person name="Richardson P."/>
        </authorList>
    </citation>
    <scope>NUCLEOTIDE SEQUENCE [LARGE SCALE GENOMIC DNA]</scope>
    <source>
        <strain>MC0-3</strain>
    </source>
</reference>
<feature type="chain" id="PRO_1000140697" description="Small ribosomal subunit protein uS4">
    <location>
        <begin position="1"/>
        <end position="207"/>
    </location>
</feature>
<feature type="domain" description="S4 RNA-binding" evidence="1">
    <location>
        <begin position="97"/>
        <end position="160"/>
    </location>
</feature>
<feature type="region of interest" description="Disordered" evidence="2">
    <location>
        <begin position="31"/>
        <end position="55"/>
    </location>
</feature>
<feature type="compositionally biased region" description="Polar residues" evidence="2">
    <location>
        <begin position="42"/>
        <end position="53"/>
    </location>
</feature>
<comment type="function">
    <text evidence="1">One of the primary rRNA binding proteins, it binds directly to 16S rRNA where it nucleates assembly of the body of the 30S subunit.</text>
</comment>
<comment type="function">
    <text evidence="1">With S5 and S12 plays an important role in translational accuracy.</text>
</comment>
<comment type="subunit">
    <text evidence="1">Part of the 30S ribosomal subunit. Contacts protein S5. The interaction surface between S4 and S5 is involved in control of translational fidelity.</text>
</comment>
<comment type="similarity">
    <text evidence="1">Belongs to the universal ribosomal protein uS4 family.</text>
</comment>